<feature type="chain" id="PRO_1000090567" description="Crossover junction endodeoxyribonuclease RuvC">
    <location>
        <begin position="1"/>
        <end position="173"/>
    </location>
</feature>
<feature type="active site" evidence="1">
    <location>
        <position position="8"/>
    </location>
</feature>
<feature type="active site" evidence="1">
    <location>
        <position position="69"/>
    </location>
</feature>
<feature type="active site" evidence="1">
    <location>
        <position position="141"/>
    </location>
</feature>
<feature type="binding site" evidence="1">
    <location>
        <position position="8"/>
    </location>
    <ligand>
        <name>Mg(2+)</name>
        <dbReference type="ChEBI" id="CHEBI:18420"/>
        <label>1</label>
    </ligand>
</feature>
<feature type="binding site" evidence="1">
    <location>
        <position position="69"/>
    </location>
    <ligand>
        <name>Mg(2+)</name>
        <dbReference type="ChEBI" id="CHEBI:18420"/>
        <label>2</label>
    </ligand>
</feature>
<feature type="binding site" evidence="1">
    <location>
        <position position="141"/>
    </location>
    <ligand>
        <name>Mg(2+)</name>
        <dbReference type="ChEBI" id="CHEBI:18420"/>
        <label>1</label>
    </ligand>
</feature>
<protein>
    <recommendedName>
        <fullName evidence="1">Crossover junction endodeoxyribonuclease RuvC</fullName>
        <ecNumber evidence="1">3.1.21.10</ecNumber>
    </recommendedName>
    <alternativeName>
        <fullName evidence="1">Holliday junction nuclease RuvC</fullName>
    </alternativeName>
    <alternativeName>
        <fullName evidence="1">Holliday junction resolvase RuvC</fullName>
    </alternativeName>
</protein>
<dbReference type="EC" id="3.1.21.10" evidence="1"/>
<dbReference type="EMBL" id="AM743169">
    <property type="protein sequence ID" value="CAQ47127.1"/>
    <property type="molecule type" value="Genomic_DNA"/>
</dbReference>
<dbReference type="RefSeq" id="WP_005410757.1">
    <property type="nucleotide sequence ID" value="NC_010943.1"/>
</dbReference>
<dbReference type="SMR" id="B2FRN7"/>
<dbReference type="EnsemblBacteria" id="CAQ47127">
    <property type="protein sequence ID" value="CAQ47127"/>
    <property type="gene ID" value="Smlt3712"/>
</dbReference>
<dbReference type="GeneID" id="93834703"/>
<dbReference type="KEGG" id="sml:Smlt3712"/>
<dbReference type="eggNOG" id="COG0817">
    <property type="taxonomic scope" value="Bacteria"/>
</dbReference>
<dbReference type="HOGENOM" id="CLU_091257_2_1_6"/>
<dbReference type="Proteomes" id="UP000008840">
    <property type="component" value="Chromosome"/>
</dbReference>
<dbReference type="GO" id="GO:0005737">
    <property type="term" value="C:cytoplasm"/>
    <property type="evidence" value="ECO:0007669"/>
    <property type="project" value="UniProtKB-SubCell"/>
</dbReference>
<dbReference type="GO" id="GO:0048476">
    <property type="term" value="C:Holliday junction resolvase complex"/>
    <property type="evidence" value="ECO:0007669"/>
    <property type="project" value="UniProtKB-UniRule"/>
</dbReference>
<dbReference type="GO" id="GO:0008821">
    <property type="term" value="F:crossover junction DNA endonuclease activity"/>
    <property type="evidence" value="ECO:0007669"/>
    <property type="project" value="UniProtKB-UniRule"/>
</dbReference>
<dbReference type="GO" id="GO:0003677">
    <property type="term" value="F:DNA binding"/>
    <property type="evidence" value="ECO:0007669"/>
    <property type="project" value="UniProtKB-KW"/>
</dbReference>
<dbReference type="GO" id="GO:0000287">
    <property type="term" value="F:magnesium ion binding"/>
    <property type="evidence" value="ECO:0007669"/>
    <property type="project" value="UniProtKB-UniRule"/>
</dbReference>
<dbReference type="GO" id="GO:0006310">
    <property type="term" value="P:DNA recombination"/>
    <property type="evidence" value="ECO:0007669"/>
    <property type="project" value="UniProtKB-UniRule"/>
</dbReference>
<dbReference type="GO" id="GO:0006281">
    <property type="term" value="P:DNA repair"/>
    <property type="evidence" value="ECO:0007669"/>
    <property type="project" value="UniProtKB-UniRule"/>
</dbReference>
<dbReference type="CDD" id="cd16962">
    <property type="entry name" value="RuvC"/>
    <property type="match status" value="1"/>
</dbReference>
<dbReference type="FunFam" id="3.30.420.10:FF:000002">
    <property type="entry name" value="Crossover junction endodeoxyribonuclease RuvC"/>
    <property type="match status" value="1"/>
</dbReference>
<dbReference type="Gene3D" id="3.30.420.10">
    <property type="entry name" value="Ribonuclease H-like superfamily/Ribonuclease H"/>
    <property type="match status" value="1"/>
</dbReference>
<dbReference type="HAMAP" id="MF_00034">
    <property type="entry name" value="RuvC"/>
    <property type="match status" value="1"/>
</dbReference>
<dbReference type="InterPro" id="IPR012337">
    <property type="entry name" value="RNaseH-like_sf"/>
</dbReference>
<dbReference type="InterPro" id="IPR036397">
    <property type="entry name" value="RNaseH_sf"/>
</dbReference>
<dbReference type="InterPro" id="IPR020563">
    <property type="entry name" value="X-over_junc_endoDNase_Mg_BS"/>
</dbReference>
<dbReference type="InterPro" id="IPR002176">
    <property type="entry name" value="X-over_junc_endoDNase_RuvC"/>
</dbReference>
<dbReference type="NCBIfam" id="TIGR00228">
    <property type="entry name" value="ruvC"/>
    <property type="match status" value="1"/>
</dbReference>
<dbReference type="PANTHER" id="PTHR30194">
    <property type="entry name" value="CROSSOVER JUNCTION ENDODEOXYRIBONUCLEASE RUVC"/>
    <property type="match status" value="1"/>
</dbReference>
<dbReference type="PANTHER" id="PTHR30194:SF3">
    <property type="entry name" value="CROSSOVER JUNCTION ENDODEOXYRIBONUCLEASE RUVC"/>
    <property type="match status" value="1"/>
</dbReference>
<dbReference type="Pfam" id="PF02075">
    <property type="entry name" value="RuvC"/>
    <property type="match status" value="1"/>
</dbReference>
<dbReference type="PRINTS" id="PR00696">
    <property type="entry name" value="RSOLVASERUVC"/>
</dbReference>
<dbReference type="SUPFAM" id="SSF53098">
    <property type="entry name" value="Ribonuclease H-like"/>
    <property type="match status" value="1"/>
</dbReference>
<dbReference type="PROSITE" id="PS01321">
    <property type="entry name" value="RUVC"/>
    <property type="match status" value="1"/>
</dbReference>
<comment type="function">
    <text evidence="1">The RuvA-RuvB-RuvC complex processes Holliday junction (HJ) DNA during genetic recombination and DNA repair. Endonuclease that resolves HJ intermediates. Cleaves cruciform DNA by making single-stranded nicks across the HJ at symmetrical positions within the homologous arms, yielding a 5'-phosphate and a 3'-hydroxyl group; requires a central core of homology in the junction. The consensus cleavage sequence is 5'-(A/T)TT(C/G)-3'. Cleavage occurs on the 3'-side of the TT dinucleotide at the point of strand exchange. HJ branch migration catalyzed by RuvA-RuvB allows RuvC to scan DNA until it finds its consensus sequence, where it cleaves and resolves the cruciform DNA.</text>
</comment>
<comment type="catalytic activity">
    <reaction evidence="1">
        <text>Endonucleolytic cleavage at a junction such as a reciprocal single-stranded crossover between two homologous DNA duplexes (Holliday junction).</text>
        <dbReference type="EC" id="3.1.21.10"/>
    </reaction>
</comment>
<comment type="cofactor">
    <cofactor evidence="1">
        <name>Mg(2+)</name>
        <dbReference type="ChEBI" id="CHEBI:18420"/>
    </cofactor>
    <text evidence="1">Binds 2 Mg(2+) ion per subunit.</text>
</comment>
<comment type="subunit">
    <text evidence="1">Homodimer which binds Holliday junction (HJ) DNA. The HJ becomes 2-fold symmetrical on binding to RuvC with unstacked arms; it has a different conformation from HJ DNA in complex with RuvA. In the full resolvosome a probable DNA-RuvA(4)-RuvB(12)-RuvC(2) complex forms which resolves the HJ.</text>
</comment>
<comment type="subcellular location">
    <subcellularLocation>
        <location evidence="1">Cytoplasm</location>
    </subcellularLocation>
</comment>
<comment type="similarity">
    <text evidence="1">Belongs to the RuvC family.</text>
</comment>
<reference key="1">
    <citation type="journal article" date="2008" name="Genome Biol.">
        <title>The complete genome, comparative and functional analysis of Stenotrophomonas maltophilia reveals an organism heavily shielded by drug resistance determinants.</title>
        <authorList>
            <person name="Crossman L.C."/>
            <person name="Gould V.C."/>
            <person name="Dow J.M."/>
            <person name="Vernikos G.S."/>
            <person name="Okazaki A."/>
            <person name="Sebaihia M."/>
            <person name="Saunders D."/>
            <person name="Arrowsmith C."/>
            <person name="Carver T."/>
            <person name="Peters N."/>
            <person name="Adlem E."/>
            <person name="Kerhornou A."/>
            <person name="Lord A."/>
            <person name="Murphy L."/>
            <person name="Seeger K."/>
            <person name="Squares R."/>
            <person name="Rutter S."/>
            <person name="Quail M.A."/>
            <person name="Rajandream M.A."/>
            <person name="Harris D."/>
            <person name="Churcher C."/>
            <person name="Bentley S.D."/>
            <person name="Parkhill J."/>
            <person name="Thomson N.R."/>
            <person name="Avison M.B."/>
        </authorList>
    </citation>
    <scope>NUCLEOTIDE SEQUENCE [LARGE SCALE GENOMIC DNA]</scope>
    <source>
        <strain>K279a</strain>
    </source>
</reference>
<organism>
    <name type="scientific">Stenotrophomonas maltophilia (strain K279a)</name>
    <dbReference type="NCBI Taxonomy" id="522373"/>
    <lineage>
        <taxon>Bacteria</taxon>
        <taxon>Pseudomonadati</taxon>
        <taxon>Pseudomonadota</taxon>
        <taxon>Gammaproteobacteria</taxon>
        <taxon>Lysobacterales</taxon>
        <taxon>Lysobacteraceae</taxon>
        <taxon>Stenotrophomonas</taxon>
        <taxon>Stenotrophomonas maltophilia group</taxon>
    </lineage>
</organism>
<gene>
    <name evidence="1" type="primary">ruvC</name>
    <name type="ordered locus">Smlt3712</name>
</gene>
<name>RUVC_STRMK</name>
<accession>B2FRN7</accession>
<sequence length="173" mass="18656">MTRILGIDPGSQRTGVGIIDVDATGRVSYVHHQPLVLLGADDFPQRMKLLVLGLADLCREYEPQEVAIERVFMARNPDSALKLGQARGAAISAVVLRDLPVHEYAASEIKLAVVGRGGAEKQQVQHMVGLMLNLKIKLQADAADALAVAITHAHVRATANRLGLSARQAWGRK</sequence>
<evidence type="ECO:0000255" key="1">
    <source>
        <dbReference type="HAMAP-Rule" id="MF_00034"/>
    </source>
</evidence>
<keyword id="KW-0963">Cytoplasm</keyword>
<keyword id="KW-0227">DNA damage</keyword>
<keyword id="KW-0233">DNA recombination</keyword>
<keyword id="KW-0234">DNA repair</keyword>
<keyword id="KW-0238">DNA-binding</keyword>
<keyword id="KW-0255">Endonuclease</keyword>
<keyword id="KW-0378">Hydrolase</keyword>
<keyword id="KW-0460">Magnesium</keyword>
<keyword id="KW-0479">Metal-binding</keyword>
<keyword id="KW-0540">Nuclease</keyword>
<keyword id="KW-1185">Reference proteome</keyword>
<proteinExistence type="inferred from homology"/>